<reference key="1">
    <citation type="journal article" date="2005" name="Science">
        <title>The transcriptional landscape of the mammalian genome.</title>
        <authorList>
            <person name="Carninci P."/>
            <person name="Kasukawa T."/>
            <person name="Katayama S."/>
            <person name="Gough J."/>
            <person name="Frith M.C."/>
            <person name="Maeda N."/>
            <person name="Oyama R."/>
            <person name="Ravasi T."/>
            <person name="Lenhard B."/>
            <person name="Wells C."/>
            <person name="Kodzius R."/>
            <person name="Shimokawa K."/>
            <person name="Bajic V.B."/>
            <person name="Brenner S.E."/>
            <person name="Batalov S."/>
            <person name="Forrest A.R."/>
            <person name="Zavolan M."/>
            <person name="Davis M.J."/>
            <person name="Wilming L.G."/>
            <person name="Aidinis V."/>
            <person name="Allen J.E."/>
            <person name="Ambesi-Impiombato A."/>
            <person name="Apweiler R."/>
            <person name="Aturaliya R.N."/>
            <person name="Bailey T.L."/>
            <person name="Bansal M."/>
            <person name="Baxter L."/>
            <person name="Beisel K.W."/>
            <person name="Bersano T."/>
            <person name="Bono H."/>
            <person name="Chalk A.M."/>
            <person name="Chiu K.P."/>
            <person name="Choudhary V."/>
            <person name="Christoffels A."/>
            <person name="Clutterbuck D.R."/>
            <person name="Crowe M.L."/>
            <person name="Dalla E."/>
            <person name="Dalrymple B.P."/>
            <person name="de Bono B."/>
            <person name="Della Gatta G."/>
            <person name="di Bernardo D."/>
            <person name="Down T."/>
            <person name="Engstrom P."/>
            <person name="Fagiolini M."/>
            <person name="Faulkner G."/>
            <person name="Fletcher C.F."/>
            <person name="Fukushima T."/>
            <person name="Furuno M."/>
            <person name="Futaki S."/>
            <person name="Gariboldi M."/>
            <person name="Georgii-Hemming P."/>
            <person name="Gingeras T.R."/>
            <person name="Gojobori T."/>
            <person name="Green R.E."/>
            <person name="Gustincich S."/>
            <person name="Harbers M."/>
            <person name="Hayashi Y."/>
            <person name="Hensch T.K."/>
            <person name="Hirokawa N."/>
            <person name="Hill D."/>
            <person name="Huminiecki L."/>
            <person name="Iacono M."/>
            <person name="Ikeo K."/>
            <person name="Iwama A."/>
            <person name="Ishikawa T."/>
            <person name="Jakt M."/>
            <person name="Kanapin A."/>
            <person name="Katoh M."/>
            <person name="Kawasawa Y."/>
            <person name="Kelso J."/>
            <person name="Kitamura H."/>
            <person name="Kitano H."/>
            <person name="Kollias G."/>
            <person name="Krishnan S.P."/>
            <person name="Kruger A."/>
            <person name="Kummerfeld S.K."/>
            <person name="Kurochkin I.V."/>
            <person name="Lareau L.F."/>
            <person name="Lazarevic D."/>
            <person name="Lipovich L."/>
            <person name="Liu J."/>
            <person name="Liuni S."/>
            <person name="McWilliam S."/>
            <person name="Madan Babu M."/>
            <person name="Madera M."/>
            <person name="Marchionni L."/>
            <person name="Matsuda H."/>
            <person name="Matsuzawa S."/>
            <person name="Miki H."/>
            <person name="Mignone F."/>
            <person name="Miyake S."/>
            <person name="Morris K."/>
            <person name="Mottagui-Tabar S."/>
            <person name="Mulder N."/>
            <person name="Nakano N."/>
            <person name="Nakauchi H."/>
            <person name="Ng P."/>
            <person name="Nilsson R."/>
            <person name="Nishiguchi S."/>
            <person name="Nishikawa S."/>
            <person name="Nori F."/>
            <person name="Ohara O."/>
            <person name="Okazaki Y."/>
            <person name="Orlando V."/>
            <person name="Pang K.C."/>
            <person name="Pavan W.J."/>
            <person name="Pavesi G."/>
            <person name="Pesole G."/>
            <person name="Petrovsky N."/>
            <person name="Piazza S."/>
            <person name="Reed J."/>
            <person name="Reid J.F."/>
            <person name="Ring B.Z."/>
            <person name="Ringwald M."/>
            <person name="Rost B."/>
            <person name="Ruan Y."/>
            <person name="Salzberg S.L."/>
            <person name="Sandelin A."/>
            <person name="Schneider C."/>
            <person name="Schoenbach C."/>
            <person name="Sekiguchi K."/>
            <person name="Semple C.A."/>
            <person name="Seno S."/>
            <person name="Sessa L."/>
            <person name="Sheng Y."/>
            <person name="Shibata Y."/>
            <person name="Shimada H."/>
            <person name="Shimada K."/>
            <person name="Silva D."/>
            <person name="Sinclair B."/>
            <person name="Sperling S."/>
            <person name="Stupka E."/>
            <person name="Sugiura K."/>
            <person name="Sultana R."/>
            <person name="Takenaka Y."/>
            <person name="Taki K."/>
            <person name="Tammoja K."/>
            <person name="Tan S.L."/>
            <person name="Tang S."/>
            <person name="Taylor M.S."/>
            <person name="Tegner J."/>
            <person name="Teichmann S.A."/>
            <person name="Ueda H.R."/>
            <person name="van Nimwegen E."/>
            <person name="Verardo R."/>
            <person name="Wei C.L."/>
            <person name="Yagi K."/>
            <person name="Yamanishi H."/>
            <person name="Zabarovsky E."/>
            <person name="Zhu S."/>
            <person name="Zimmer A."/>
            <person name="Hide W."/>
            <person name="Bult C."/>
            <person name="Grimmond S.M."/>
            <person name="Teasdale R.D."/>
            <person name="Liu E.T."/>
            <person name="Brusic V."/>
            <person name="Quackenbush J."/>
            <person name="Wahlestedt C."/>
            <person name="Mattick J.S."/>
            <person name="Hume D.A."/>
            <person name="Kai C."/>
            <person name="Sasaki D."/>
            <person name="Tomaru Y."/>
            <person name="Fukuda S."/>
            <person name="Kanamori-Katayama M."/>
            <person name="Suzuki M."/>
            <person name="Aoki J."/>
            <person name="Arakawa T."/>
            <person name="Iida J."/>
            <person name="Imamura K."/>
            <person name="Itoh M."/>
            <person name="Kato T."/>
            <person name="Kawaji H."/>
            <person name="Kawagashira N."/>
            <person name="Kawashima T."/>
            <person name="Kojima M."/>
            <person name="Kondo S."/>
            <person name="Konno H."/>
            <person name="Nakano K."/>
            <person name="Ninomiya N."/>
            <person name="Nishio T."/>
            <person name="Okada M."/>
            <person name="Plessy C."/>
            <person name="Shibata K."/>
            <person name="Shiraki T."/>
            <person name="Suzuki S."/>
            <person name="Tagami M."/>
            <person name="Waki K."/>
            <person name="Watahiki A."/>
            <person name="Okamura-Oho Y."/>
            <person name="Suzuki H."/>
            <person name="Kawai J."/>
            <person name="Hayashizaki Y."/>
        </authorList>
    </citation>
    <scope>NUCLEOTIDE SEQUENCE [LARGE SCALE MRNA]</scope>
    <source>
        <strain>C57BL/6J</strain>
        <tissue>Hippocampus</tissue>
    </source>
</reference>
<reference key="2">
    <citation type="journal article" date="2004" name="Genome Res.">
        <title>The status, quality, and expansion of the NIH full-length cDNA project: the Mammalian Gene Collection (MGC).</title>
        <authorList>
            <consortium name="The MGC Project Team"/>
        </authorList>
    </citation>
    <scope>NUCLEOTIDE SEQUENCE [LARGE SCALE MRNA]</scope>
    <source>
        <strain>Czech II</strain>
        <tissue>Mammary tumor</tissue>
    </source>
</reference>
<reference key="3">
    <citation type="journal article" date="2007" name="Proc. Natl. Acad. Sci. U.S.A.">
        <title>Large-scale phosphorylation analysis of mouse liver.</title>
        <authorList>
            <person name="Villen J."/>
            <person name="Beausoleil S.A."/>
            <person name="Gerber S.A."/>
            <person name="Gygi S.P."/>
        </authorList>
    </citation>
    <scope>IDENTIFICATION BY MASS SPECTROMETRY [LARGE SCALE ANALYSIS]</scope>
    <source>
        <tissue>Liver</tissue>
    </source>
</reference>
<reference key="4">
    <citation type="journal article" date="2010" name="Cell">
        <title>A tissue-specific atlas of mouse protein phosphorylation and expression.</title>
        <authorList>
            <person name="Huttlin E.L."/>
            <person name="Jedrychowski M.P."/>
            <person name="Elias J.E."/>
            <person name="Goswami T."/>
            <person name="Rad R."/>
            <person name="Beausoleil S.A."/>
            <person name="Villen J."/>
            <person name="Haas W."/>
            <person name="Sowa M.E."/>
            <person name="Gygi S.P."/>
        </authorList>
    </citation>
    <scope>PHOSPHORYLATION [LARGE SCALE ANALYSIS] AT SER-569; SER-573 AND SER-575</scope>
    <scope>IDENTIFICATION BY MASS SPECTROMETRY [LARGE SCALE ANALYSIS]</scope>
    <source>
        <tissue>Brain</tissue>
        <tissue>Brown adipose tissue</tissue>
        <tissue>Heart</tissue>
        <tissue>Kidney</tissue>
        <tissue>Liver</tissue>
        <tissue>Lung</tissue>
        <tissue>Pancreas</tissue>
        <tissue>Spleen</tissue>
        <tissue>Testis</tissue>
    </source>
</reference>
<reference key="5">
    <citation type="submission" date="2004-08" db="PDB data bank">
        <title>NMR structure of the R3H domain from poly(A)-specific ribonuclease.</title>
        <authorList>
            <consortium name="RIKEN structural genomics initiative (RSGI)"/>
        </authorList>
    </citation>
    <scope>STRUCTURE BY NMR OF 162-248 AND 430-516</scope>
</reference>
<sequence>MEIIRSNFKINLHKVYQAIEEADFFAIDGEFSGISDGPSVTALTSGFDTPEERYQKLKKHSMDFLLFQFGLCAFKYDHTDSKHVTKSFNFYVFPKPFSRSSPDVKFVCQSSSIDFLASQGFDFNKVFCSGIPYLNQEEERQLREQFDEKRSQANGAGALAKCPVTIPEDQKKFIDQVIEKIEDFLQSEEKRSLELDPCTGFQRKLIYQTLSWKYPKGIHVETLETDKKERHIVISKVDEEERKRREQEKYTKEQEELNDAVGFSRVIHAIANSGKLVVGHNMLLDVMHTIHQFYCPLPADLNEFKEMAICVFPRLLDTKLMASTQPFKDIINNTSLAELEKRLKETPFDPPKVESAEGFPSYDTASEQLHEAGYDAYITGLCFISMANYLGSLLSPPKMCVSARSKLIEPFFNKLFLMRVMDIPYLNLEGPDLQPKRDHVLHVTFPKEWKTSDLYQLFSAFGNIQISWIDDTSAFVSLSQPEQVQIAVNTSKYAESYRIQTYAEYVGKKQEGKQVKRKWTEDSWKEVDRKRPHMQGPCYHSNSFTAAGVLGKRTLSPDPREAALEDRESEEVSDSELEQTDSCTDPLPEGRKKSKKLKRMKKELSLAGSVSDSPAVLFEVPDTW</sequence>
<feature type="chain" id="PRO_0000212852" description="Poly(A)-specific ribonuclease PARN">
    <location>
        <begin position="1"/>
        <end position="624"/>
    </location>
</feature>
<feature type="domain" description="R3H" evidence="2">
    <location>
        <begin position="171"/>
        <end position="238"/>
    </location>
</feature>
<feature type="region of interest" description="Disordered" evidence="3">
    <location>
        <begin position="551"/>
        <end position="612"/>
    </location>
</feature>
<feature type="compositionally biased region" description="Acidic residues" evidence="3">
    <location>
        <begin position="567"/>
        <end position="579"/>
    </location>
</feature>
<feature type="compositionally biased region" description="Basic residues" evidence="3">
    <location>
        <begin position="592"/>
        <end position="601"/>
    </location>
</feature>
<feature type="binding site" evidence="1">
    <location>
        <position position="28"/>
    </location>
    <ligand>
        <name>a divalent metal cation</name>
        <dbReference type="ChEBI" id="CHEBI:60240"/>
        <note>catalytic</note>
    </ligand>
</feature>
<feature type="binding site" evidence="1">
    <location>
        <position position="30"/>
    </location>
    <ligand>
        <name>a divalent metal cation</name>
        <dbReference type="ChEBI" id="CHEBI:60240"/>
        <note>catalytic</note>
    </ligand>
</feature>
<feature type="binding site" evidence="1">
    <location>
        <position position="285"/>
    </location>
    <ligand>
        <name>a divalent metal cation</name>
        <dbReference type="ChEBI" id="CHEBI:60240"/>
        <note>catalytic</note>
    </ligand>
</feature>
<feature type="binding site" evidence="1">
    <location>
        <position position="375"/>
    </location>
    <ligand>
        <name>a divalent metal cation</name>
        <dbReference type="ChEBI" id="CHEBI:60240"/>
        <note>catalytic</note>
    </ligand>
</feature>
<feature type="site" description="Interaction with poly(A)" evidence="1">
    <location>
        <position position="319"/>
    </location>
</feature>
<feature type="modified residue" description="N6-acetyllysine" evidence="1">
    <location>
        <position position="213"/>
    </location>
</feature>
<feature type="modified residue" description="N6-acetyllysine" evidence="1">
    <location>
        <position position="492"/>
    </location>
</feature>
<feature type="modified residue" description="Phosphoserine" evidence="1">
    <location>
        <position position="523"/>
    </location>
</feature>
<feature type="modified residue" description="Phosphoserine; by MAPKAPK2" evidence="1">
    <location>
        <position position="543"/>
    </location>
</feature>
<feature type="modified residue" description="Phosphoserine" evidence="5">
    <location>
        <position position="569"/>
    </location>
</feature>
<feature type="modified residue" description="Phosphoserine" evidence="5">
    <location>
        <position position="573"/>
    </location>
</feature>
<feature type="modified residue" description="Phosphoserine" evidence="5">
    <location>
        <position position="575"/>
    </location>
</feature>
<feature type="modified residue" description="Phosphoserine" evidence="1">
    <location>
        <position position="605"/>
    </location>
</feature>
<feature type="modified residue" description="Phosphoserine" evidence="1">
    <location>
        <position position="609"/>
    </location>
</feature>
<feature type="modified residue" description="Phosphoserine" evidence="1">
    <location>
        <position position="613"/>
    </location>
</feature>
<feature type="sequence conflict" description="In Ref. 1; BAB23382/BAC32249." evidence="4" ref="1">
    <original>D</original>
    <variation>N</variation>
    <location>
        <position position="36"/>
    </location>
</feature>
<feature type="sequence conflict" description="In Ref. 1; BAB23382/BAC32249." evidence="4" ref="1">
    <original>E</original>
    <variation>K</variation>
    <location>
        <position position="511"/>
    </location>
</feature>
<feature type="sequence conflict" description="In Ref. 1; BAB23382/BAC32249." evidence="4" ref="1">
    <original>V</original>
    <variation>M</variation>
    <location>
        <position position="549"/>
    </location>
</feature>
<feature type="strand" evidence="8">
    <location>
        <begin position="1"/>
        <end position="3"/>
    </location>
</feature>
<feature type="helix" evidence="8">
    <location>
        <begin position="5"/>
        <end position="21"/>
    </location>
</feature>
<feature type="strand" evidence="8">
    <location>
        <begin position="23"/>
        <end position="32"/>
    </location>
</feature>
<feature type="helix" evidence="8">
    <location>
        <begin position="40"/>
        <end position="43"/>
    </location>
</feature>
<feature type="helix" evidence="8">
    <location>
        <begin position="50"/>
        <end position="61"/>
    </location>
</feature>
<feature type="strand" evidence="8">
    <location>
        <begin position="66"/>
        <end position="76"/>
    </location>
</feature>
<feature type="strand" evidence="8">
    <location>
        <begin position="78"/>
        <end position="81"/>
    </location>
</feature>
<feature type="strand" evidence="8">
    <location>
        <begin position="83"/>
        <end position="92"/>
    </location>
</feature>
<feature type="strand" evidence="8">
    <location>
        <begin position="98"/>
        <end position="101"/>
    </location>
</feature>
<feature type="strand" evidence="8">
    <location>
        <begin position="105"/>
        <end position="109"/>
    </location>
</feature>
<feature type="helix" evidence="8">
    <location>
        <begin position="110"/>
        <end position="117"/>
    </location>
</feature>
<feature type="turn" evidence="8">
    <location>
        <begin position="118"/>
        <end position="120"/>
    </location>
</feature>
<feature type="helix" evidence="8">
    <location>
        <begin position="123"/>
        <end position="127"/>
    </location>
</feature>
<feature type="helix" evidence="8">
    <location>
        <begin position="136"/>
        <end position="145"/>
    </location>
</feature>
<feature type="helix" evidence="6">
    <location>
        <begin position="169"/>
        <end position="186"/>
    </location>
</feature>
<feature type="strand" evidence="6">
    <location>
        <begin position="192"/>
        <end position="194"/>
    </location>
</feature>
<feature type="helix" evidence="6">
    <location>
        <begin position="201"/>
        <end position="213"/>
    </location>
</feature>
<feature type="strand" evidence="6">
    <location>
        <begin position="214"/>
        <end position="223"/>
    </location>
</feature>
<feature type="strand" evidence="6">
    <location>
        <begin position="226"/>
        <end position="228"/>
    </location>
</feature>
<feature type="strand" evidence="6">
    <location>
        <begin position="230"/>
        <end position="236"/>
    </location>
</feature>
<feature type="turn" evidence="6">
    <location>
        <begin position="239"/>
        <end position="241"/>
    </location>
</feature>
<feature type="helix" evidence="8">
    <location>
        <begin position="254"/>
        <end position="260"/>
    </location>
</feature>
<feature type="helix" evidence="8">
    <location>
        <begin position="264"/>
        <end position="273"/>
    </location>
</feature>
<feature type="strand" evidence="8">
    <location>
        <begin position="276"/>
        <end position="281"/>
    </location>
</feature>
<feature type="helix" evidence="8">
    <location>
        <begin position="283"/>
        <end position="293"/>
    </location>
</feature>
<feature type="helix" evidence="8">
    <location>
        <begin position="301"/>
        <end position="311"/>
    </location>
</feature>
<feature type="strand" evidence="8">
    <location>
        <begin position="315"/>
        <end position="317"/>
    </location>
</feature>
<feature type="helix" evidence="8">
    <location>
        <begin position="318"/>
        <end position="321"/>
    </location>
</feature>
<feature type="helix" evidence="8">
    <location>
        <begin position="327"/>
        <end position="330"/>
    </location>
</feature>
<feature type="helix" evidence="8">
    <location>
        <begin position="336"/>
        <end position="342"/>
    </location>
</feature>
<feature type="strand" evidence="8">
    <location>
        <begin position="353"/>
        <end position="355"/>
    </location>
</feature>
<feature type="helix" evidence="8">
    <location>
        <begin position="372"/>
        <end position="390"/>
    </location>
</feature>
<feature type="strand" evidence="8">
    <location>
        <begin position="406"/>
        <end position="408"/>
    </location>
</feature>
<feature type="helix" evidence="8">
    <location>
        <begin position="409"/>
        <end position="411"/>
    </location>
</feature>
<feature type="strand" evidence="8">
    <location>
        <begin position="419"/>
        <end position="422"/>
    </location>
</feature>
<feature type="strand" evidence="8">
    <location>
        <begin position="425"/>
        <end position="430"/>
    </location>
</feature>
<feature type="helix" evidence="8">
    <location>
        <begin position="437"/>
        <end position="439"/>
    </location>
</feature>
<feature type="strand" evidence="8">
    <location>
        <begin position="440"/>
        <end position="444"/>
    </location>
</feature>
<feature type="helix" evidence="8">
    <location>
        <begin position="451"/>
        <end position="457"/>
    </location>
</feature>
<feature type="helix" evidence="8">
    <location>
        <begin position="458"/>
        <end position="461"/>
    </location>
</feature>
<feature type="strand" evidence="8">
    <location>
        <begin position="465"/>
        <end position="468"/>
    </location>
</feature>
<feature type="strand" evidence="8">
    <location>
        <begin position="470"/>
        <end position="477"/>
    </location>
</feature>
<feature type="helix" evidence="8">
    <location>
        <begin position="481"/>
        <end position="491"/>
    </location>
</feature>
<feature type="strand" evidence="7">
    <location>
        <begin position="496"/>
        <end position="501"/>
    </location>
</feature>
<feature type="helix" evidence="7">
    <location>
        <begin position="502"/>
        <end position="509"/>
    </location>
</feature>
<gene>
    <name type="primary">Parn</name>
</gene>
<accession>Q8VDG3</accession>
<accession>Q8C7N6</accession>
<accession>Q9DC46</accession>
<name>PARN_MOUSE</name>
<evidence type="ECO:0000250" key="1">
    <source>
        <dbReference type="UniProtKB" id="O95453"/>
    </source>
</evidence>
<evidence type="ECO:0000255" key="2">
    <source>
        <dbReference type="PROSITE-ProRule" id="PRU00382"/>
    </source>
</evidence>
<evidence type="ECO:0000256" key="3">
    <source>
        <dbReference type="SAM" id="MobiDB-lite"/>
    </source>
</evidence>
<evidence type="ECO:0000305" key="4"/>
<evidence type="ECO:0007744" key="5">
    <source>
    </source>
</evidence>
<evidence type="ECO:0007829" key="6">
    <source>
        <dbReference type="PDB" id="1UG8"/>
    </source>
</evidence>
<evidence type="ECO:0007829" key="7">
    <source>
        <dbReference type="PDB" id="1WHV"/>
    </source>
</evidence>
<evidence type="ECO:0007829" key="8">
    <source>
        <dbReference type="PDB" id="3D45"/>
    </source>
</evidence>
<organism>
    <name type="scientific">Mus musculus</name>
    <name type="common">Mouse</name>
    <dbReference type="NCBI Taxonomy" id="10090"/>
    <lineage>
        <taxon>Eukaryota</taxon>
        <taxon>Metazoa</taxon>
        <taxon>Chordata</taxon>
        <taxon>Craniata</taxon>
        <taxon>Vertebrata</taxon>
        <taxon>Euteleostomi</taxon>
        <taxon>Mammalia</taxon>
        <taxon>Eutheria</taxon>
        <taxon>Euarchontoglires</taxon>
        <taxon>Glires</taxon>
        <taxon>Rodentia</taxon>
        <taxon>Myomorpha</taxon>
        <taxon>Muroidea</taxon>
        <taxon>Muridae</taxon>
        <taxon>Murinae</taxon>
        <taxon>Mus</taxon>
        <taxon>Mus</taxon>
    </lineage>
</organism>
<proteinExistence type="evidence at protein level"/>
<dbReference type="EC" id="3.1.13.4"/>
<dbReference type="EMBL" id="AK004572">
    <property type="protein sequence ID" value="BAB23382.1"/>
    <property type="molecule type" value="mRNA"/>
</dbReference>
<dbReference type="EMBL" id="AK045181">
    <property type="protein sequence ID" value="BAC32249.1"/>
    <property type="molecule type" value="mRNA"/>
</dbReference>
<dbReference type="EMBL" id="BC021899">
    <property type="protein sequence ID" value="AAH21899.1"/>
    <property type="molecule type" value="mRNA"/>
</dbReference>
<dbReference type="CCDS" id="CCDS37259.1"/>
<dbReference type="RefSeq" id="NP_083037.1">
    <property type="nucleotide sequence ID" value="NM_028761.3"/>
</dbReference>
<dbReference type="PDB" id="1UG8">
    <property type="method" value="NMR"/>
    <property type="chains" value="A=169-242"/>
</dbReference>
<dbReference type="PDB" id="1WHV">
    <property type="method" value="NMR"/>
    <property type="chains" value="A=430-516"/>
</dbReference>
<dbReference type="PDB" id="2ROK">
    <property type="method" value="NMR"/>
    <property type="chains" value="A=430-516"/>
</dbReference>
<dbReference type="PDB" id="3D45">
    <property type="method" value="X-ray"/>
    <property type="resolution" value="3.00 A"/>
    <property type="chains" value="A/B=1-505"/>
</dbReference>
<dbReference type="PDBsum" id="1UG8"/>
<dbReference type="PDBsum" id="1WHV"/>
<dbReference type="PDBsum" id="2ROK"/>
<dbReference type="PDBsum" id="3D45"/>
<dbReference type="SMR" id="Q8VDG3"/>
<dbReference type="BioGRID" id="216499">
    <property type="interactions" value="3"/>
</dbReference>
<dbReference type="DIP" id="DIP-48330N"/>
<dbReference type="FunCoup" id="Q8VDG3">
    <property type="interactions" value="2682"/>
</dbReference>
<dbReference type="IntAct" id="Q8VDG3">
    <property type="interactions" value="1"/>
</dbReference>
<dbReference type="STRING" id="10090.ENSMUSP00000055969"/>
<dbReference type="GlyGen" id="Q8VDG3">
    <property type="glycosylation" value="1 site, 1 O-linked glycan (1 site)"/>
</dbReference>
<dbReference type="iPTMnet" id="Q8VDG3"/>
<dbReference type="PhosphoSitePlus" id="Q8VDG3"/>
<dbReference type="jPOST" id="Q8VDG3"/>
<dbReference type="PaxDb" id="10090-ENSMUSP00000055969"/>
<dbReference type="PeptideAtlas" id="Q8VDG3"/>
<dbReference type="ProteomicsDB" id="288063"/>
<dbReference type="Pumba" id="Q8VDG3"/>
<dbReference type="DNASU" id="74108"/>
<dbReference type="GeneID" id="74108"/>
<dbReference type="KEGG" id="mmu:74108"/>
<dbReference type="AGR" id="MGI:1921358"/>
<dbReference type="CTD" id="5073"/>
<dbReference type="MGI" id="MGI:1921358">
    <property type="gene designation" value="Parn"/>
</dbReference>
<dbReference type="eggNOG" id="KOG1990">
    <property type="taxonomic scope" value="Eukaryota"/>
</dbReference>
<dbReference type="InParanoid" id="Q8VDG3"/>
<dbReference type="OrthoDB" id="1432093at2759"/>
<dbReference type="PhylomeDB" id="Q8VDG3"/>
<dbReference type="TreeFam" id="TF314502"/>
<dbReference type="BRENDA" id="3.1.13.4">
    <property type="organism ID" value="3474"/>
</dbReference>
<dbReference type="Reactome" id="R-MMU-429947">
    <property type="pathway name" value="Deadenylation of mRNA"/>
</dbReference>
<dbReference type="Reactome" id="R-MMU-450604">
    <property type="pathway name" value="KSRP (KHSRP) binds and destabilizes mRNA"/>
</dbReference>
<dbReference type="BioGRID-ORCS" id="74108">
    <property type="hits" value="24 hits in 82 CRISPR screens"/>
</dbReference>
<dbReference type="ChiTaRS" id="Parn">
    <property type="organism name" value="mouse"/>
</dbReference>
<dbReference type="EvolutionaryTrace" id="Q8VDG3"/>
<dbReference type="PRO" id="PR:Q8VDG3"/>
<dbReference type="Proteomes" id="UP000000589">
    <property type="component" value="Unplaced"/>
</dbReference>
<dbReference type="RNAct" id="Q8VDG3">
    <property type="molecule type" value="protein"/>
</dbReference>
<dbReference type="GO" id="GO:0005737">
    <property type="term" value="C:cytoplasm"/>
    <property type="evidence" value="ECO:0007669"/>
    <property type="project" value="UniProtKB-SubCell"/>
</dbReference>
<dbReference type="GO" id="GO:0005730">
    <property type="term" value="C:nucleolus"/>
    <property type="evidence" value="ECO:0007669"/>
    <property type="project" value="UniProtKB-SubCell"/>
</dbReference>
<dbReference type="GO" id="GO:0043169">
    <property type="term" value="F:cation binding"/>
    <property type="evidence" value="ECO:0000250"/>
    <property type="project" value="UniProtKB"/>
</dbReference>
<dbReference type="GO" id="GO:0046872">
    <property type="term" value="F:metal ion binding"/>
    <property type="evidence" value="ECO:0007669"/>
    <property type="project" value="UniProtKB-KW"/>
</dbReference>
<dbReference type="GO" id="GO:0004535">
    <property type="term" value="F:poly(A)-specific ribonuclease activity"/>
    <property type="evidence" value="ECO:0000250"/>
    <property type="project" value="UniProtKB"/>
</dbReference>
<dbReference type="GO" id="GO:0003723">
    <property type="term" value="F:RNA binding"/>
    <property type="evidence" value="ECO:0000250"/>
    <property type="project" value="UniProtKB"/>
</dbReference>
<dbReference type="GO" id="GO:0000495">
    <property type="term" value="P:box H/ACA sno(s)RNA 3'-end processing"/>
    <property type="evidence" value="ECO:0000250"/>
    <property type="project" value="UniProtKB"/>
</dbReference>
<dbReference type="GO" id="GO:0010587">
    <property type="term" value="P:miRNA catabolic process"/>
    <property type="evidence" value="ECO:0000250"/>
    <property type="project" value="UniProtKB"/>
</dbReference>
<dbReference type="GO" id="GO:0000184">
    <property type="term" value="P:nuclear-transcribed mRNA catabolic process, nonsense-mediated decay"/>
    <property type="evidence" value="ECO:0007669"/>
    <property type="project" value="UniProtKB-KW"/>
</dbReference>
<dbReference type="GO" id="GO:0000289">
    <property type="term" value="P:nuclear-transcribed mRNA poly(A) tail shortening"/>
    <property type="evidence" value="ECO:0000314"/>
    <property type="project" value="MGI"/>
</dbReference>
<dbReference type="GO" id="GO:0071051">
    <property type="term" value="P:poly(A)-dependent snoRNA 3'-end processing"/>
    <property type="evidence" value="ECO:0000250"/>
    <property type="project" value="UniProtKB"/>
</dbReference>
<dbReference type="CDD" id="cd02637">
    <property type="entry name" value="R3H_PARN"/>
    <property type="match status" value="1"/>
</dbReference>
<dbReference type="CDD" id="cd12428">
    <property type="entry name" value="RRM_PARN"/>
    <property type="match status" value="1"/>
</dbReference>
<dbReference type="FunFam" id="3.30.420.10:FF:000035">
    <property type="entry name" value="Poly(A)-specific ribonuclease PARN"/>
    <property type="match status" value="1"/>
</dbReference>
<dbReference type="FunFam" id="3.30.70.330:FF:000196">
    <property type="entry name" value="Poly(A)-specific ribonuclease PARN"/>
    <property type="match status" value="1"/>
</dbReference>
<dbReference type="FunFam" id="3.30.420.10:FF:000042">
    <property type="entry name" value="poly(A)-specific ribonuclease PARN"/>
    <property type="match status" value="1"/>
</dbReference>
<dbReference type="Gene3D" id="3.30.70.330">
    <property type="match status" value="1"/>
</dbReference>
<dbReference type="Gene3D" id="3.30.420.10">
    <property type="entry name" value="Ribonuclease H-like superfamily/Ribonuclease H"/>
    <property type="match status" value="2"/>
</dbReference>
<dbReference type="InterPro" id="IPR051181">
    <property type="entry name" value="CAF1_poly(A)_ribonucleases"/>
</dbReference>
<dbReference type="InterPro" id="IPR012677">
    <property type="entry name" value="Nucleotide-bd_a/b_plait_sf"/>
</dbReference>
<dbReference type="InterPro" id="IPR034042">
    <property type="entry name" value="PARN_R3H"/>
</dbReference>
<dbReference type="InterPro" id="IPR014789">
    <property type="entry name" value="PolyA-riboNase_RNA-binding"/>
</dbReference>
<dbReference type="InterPro" id="IPR001374">
    <property type="entry name" value="R3H_dom"/>
</dbReference>
<dbReference type="InterPro" id="IPR036867">
    <property type="entry name" value="R3H_dom_sf"/>
</dbReference>
<dbReference type="InterPro" id="IPR035979">
    <property type="entry name" value="RBD_domain_sf"/>
</dbReference>
<dbReference type="InterPro" id="IPR006941">
    <property type="entry name" value="RNase_CAF1"/>
</dbReference>
<dbReference type="InterPro" id="IPR012337">
    <property type="entry name" value="RNaseH-like_sf"/>
</dbReference>
<dbReference type="InterPro" id="IPR036397">
    <property type="entry name" value="RNaseH_sf"/>
</dbReference>
<dbReference type="PANTHER" id="PTHR15092">
    <property type="entry name" value="POLY A -SPECIFIC RIBONUCLEASE/TARGET OF EGR1, MEMBER 1"/>
    <property type="match status" value="1"/>
</dbReference>
<dbReference type="PANTHER" id="PTHR15092:SF44">
    <property type="entry name" value="POLY(A)-SPECIFIC RIBONUCLEASE PARN"/>
    <property type="match status" value="1"/>
</dbReference>
<dbReference type="Pfam" id="PF04857">
    <property type="entry name" value="CAF1"/>
    <property type="match status" value="1"/>
</dbReference>
<dbReference type="Pfam" id="PF01424">
    <property type="entry name" value="R3H"/>
    <property type="match status" value="1"/>
</dbReference>
<dbReference type="Pfam" id="PF08675">
    <property type="entry name" value="RNA_bind"/>
    <property type="match status" value="1"/>
</dbReference>
<dbReference type="SUPFAM" id="SSF82708">
    <property type="entry name" value="R3H domain"/>
    <property type="match status" value="1"/>
</dbReference>
<dbReference type="SUPFAM" id="SSF53098">
    <property type="entry name" value="Ribonuclease H-like"/>
    <property type="match status" value="1"/>
</dbReference>
<dbReference type="SUPFAM" id="SSF54928">
    <property type="entry name" value="RNA-binding domain, RBD"/>
    <property type="match status" value="1"/>
</dbReference>
<dbReference type="PROSITE" id="PS51061">
    <property type="entry name" value="R3H"/>
    <property type="match status" value="1"/>
</dbReference>
<protein>
    <recommendedName>
        <fullName>Poly(A)-specific ribonuclease PARN</fullName>
        <ecNumber>3.1.13.4</ecNumber>
    </recommendedName>
    <alternativeName>
        <fullName>Polyadenylate-specific ribonuclease</fullName>
    </alternativeName>
</protein>
<keyword id="KW-0002">3D-structure</keyword>
<keyword id="KW-0007">Acetylation</keyword>
<keyword id="KW-0963">Cytoplasm</keyword>
<keyword id="KW-0269">Exonuclease</keyword>
<keyword id="KW-0378">Hydrolase</keyword>
<keyword id="KW-0460">Magnesium</keyword>
<keyword id="KW-0479">Metal-binding</keyword>
<keyword id="KW-0866">Nonsense-mediated mRNA decay</keyword>
<keyword id="KW-0540">Nuclease</keyword>
<keyword id="KW-0539">Nucleus</keyword>
<keyword id="KW-0597">Phosphoprotein</keyword>
<keyword id="KW-1185">Reference proteome</keyword>
<keyword id="KW-0694">RNA-binding</keyword>
<comment type="function">
    <text evidence="1">3'-exoribonuclease that has a preference for poly(A) tails of mRNAs, thereby efficiently degrading poly(A) tails. Exonucleolytic degradation of the poly(A) tail is often the first step in the decay of eukaryotic mRNAs and is also used to silence certain maternal mRNAs translationally during oocyte maturation and early embryonic development. Interacts with both the 3'-end poly(A) tail and the 5'-end cap structure during degradation, the interaction with the cap structure being required for an efficient degradation of poly(A) tails. Involved in nonsense-mediated mRNA decay, a critical process of selective degradation of mRNAs that contain premature stop codons. Also involved in degradation of inherently unstable mRNAs that contain AU-rich elements (AREs) in their 3'-UTR, possibly via its interaction with KHSRP. Probably mediates the removal of poly(A) tails of AREs mRNAs, which constitutes the first step of destabilization (By similarity). Also able to recognize poly(A) tails of microRNAs such as MIR21 and H/ACA box snoRNAs (small nucleolar RNAs) leading to leading to microRNAs degradation or snoRNA increased stability (By similarity).</text>
</comment>
<comment type="catalytic activity">
    <reaction>
        <text>Exonucleolytic cleavage of poly(A) to 5'-AMP.</text>
        <dbReference type="EC" id="3.1.13.4"/>
    </reaction>
</comment>
<comment type="cofactor">
    <cofactor evidence="1">
        <name>Mg(2+)</name>
        <dbReference type="ChEBI" id="CHEBI:18420"/>
    </cofactor>
    <text evidence="1">Divalent metal cations. Mg(2+) is the most probable.</text>
</comment>
<comment type="subunit">
    <text evidence="1">Homodimer. Found in a mRNA decay complex with RENT1, RENT2 and RENT3B. Interacts with KHSRP. Interacts with CELF1/CUGBP1. Interacts with ZC3HAV1 in an RNA-independent manner. Interacts with DHX36.</text>
</comment>
<comment type="subcellular location">
    <subcellularLocation>
        <location evidence="1">Nucleus</location>
    </subcellularLocation>
    <subcellularLocation>
        <location evidence="1">Cytoplasm</location>
    </subcellularLocation>
    <subcellularLocation>
        <location evidence="1">Nucleus</location>
        <location evidence="1">Nucleolus</location>
    </subcellularLocation>
    <text evidence="1">Some nuclear fraction is nucleolar.</text>
</comment>
<comment type="PTM">
    <text evidence="1">Phosphorylation by MAPKAPK2, preventing GADD45A mRNA degradation after genotoxic stress.</text>
</comment>
<comment type="similarity">
    <text evidence="4">Belongs to the CAF1 family.</text>
</comment>